<organism>
    <name type="scientific">Rattus norvegicus</name>
    <name type="common">Rat</name>
    <dbReference type="NCBI Taxonomy" id="10116"/>
    <lineage>
        <taxon>Eukaryota</taxon>
        <taxon>Metazoa</taxon>
        <taxon>Chordata</taxon>
        <taxon>Craniata</taxon>
        <taxon>Vertebrata</taxon>
        <taxon>Euteleostomi</taxon>
        <taxon>Mammalia</taxon>
        <taxon>Eutheria</taxon>
        <taxon>Euarchontoglires</taxon>
        <taxon>Glires</taxon>
        <taxon>Rodentia</taxon>
        <taxon>Myomorpha</taxon>
        <taxon>Muroidea</taxon>
        <taxon>Muridae</taxon>
        <taxon>Murinae</taxon>
        <taxon>Rattus</taxon>
    </lineage>
</organism>
<gene>
    <name type="primary">Pnoc</name>
</gene>
<evidence type="ECO:0000250" key="1">
    <source>
        <dbReference type="UniProtKB" id="O62647"/>
    </source>
</evidence>
<evidence type="ECO:0000250" key="2">
    <source>
        <dbReference type="UniProtKB" id="Q64387"/>
    </source>
</evidence>
<evidence type="ECO:0000255" key="3"/>
<evidence type="ECO:0000256" key="4">
    <source>
        <dbReference type="SAM" id="MobiDB-lite"/>
    </source>
</evidence>
<evidence type="ECO:0000269" key="5">
    <source>
    </source>
</evidence>
<evidence type="ECO:0000269" key="6">
    <source>
    </source>
</evidence>
<evidence type="ECO:0000269" key="7">
    <source>
    </source>
</evidence>
<evidence type="ECO:0000305" key="8"/>
<reference key="1">
    <citation type="journal article" date="1996" name="Proc. Natl. Acad. Sci. U.S.A.">
        <title>Primary structure and tissue distribution of the orphanin FQ precursor.</title>
        <authorList>
            <person name="Nothacker H.-P."/>
            <person name="Reinscheid R.K."/>
            <person name="Mansour A."/>
            <person name="Henningsen R.A."/>
            <person name="Ardati A."/>
            <person name="Monsma F.J. Jr."/>
            <person name="Watson S.J."/>
            <person name="Civelli O."/>
        </authorList>
    </citation>
    <scope>NUCLEOTIDE SEQUENCE [MRNA]</scope>
    <scope>TISSUE SPECIFICITY</scope>
    <source>
        <strain>Sprague-Dawley</strain>
    </source>
</reference>
<reference key="2">
    <citation type="journal article" date="1996" name="Proc. Natl. Acad. Sci. U.S.A.">
        <title>Structure, tissue distribution, and chromosomal localization of the prepronociceptin gene.</title>
        <authorList>
            <person name="Mollereau C."/>
            <person name="Simons M.-J."/>
            <person name="Soularue P."/>
            <person name="Liners F."/>
            <person name="Vassart G."/>
            <person name="Meunier J.-C."/>
            <person name="Parmentier M."/>
        </authorList>
    </citation>
    <scope>NUCLEOTIDE SEQUENCE [MRNA]</scope>
    <scope>TISSUE SPECIFICITY</scope>
</reference>
<reference key="3">
    <citation type="journal article" date="1995" name="Nature">
        <title>Isolation and structure of the endogenous agonist of opioid receptor-like ORL1 receptor.</title>
        <authorList>
            <person name="Meunier J.-C."/>
            <person name="Mollereau C."/>
            <person name="Toll L."/>
            <person name="Suaudeau C."/>
            <person name="Moisand C."/>
            <person name="Alvinerie P."/>
            <person name="Butour J.-L."/>
            <person name="Guillemot J.-C."/>
            <person name="Ferrara P."/>
            <person name="Monsarrat B."/>
            <person name="Mazarguil H."/>
            <person name="Vassart G."/>
            <person name="Parmentier M."/>
            <person name="Costentin J."/>
        </authorList>
    </citation>
    <scope>NUCLEOTIDE SEQUENCE [MRNA] OF 13-181</scope>
    <scope>PROTEIN SEQUENCE OF 135-151</scope>
    <scope>FUNCTION</scope>
    <source>
        <tissue>Brain</tissue>
    </source>
</reference>
<comment type="function">
    <molecule>Nociceptin</molecule>
    <text evidence="5">Ligand of the opioid receptor-like receptor OPRL1. It may act as a transmitter in the brain by modulating nociceptive and locomotor behavior. May be involved in neuronal differentiation and development.</text>
</comment>
<comment type="function">
    <molecule>Nocistatin</molecule>
    <text evidence="1">Blocks nociceptin action in pain transmission by inhibiting nociceptin-induced hyperalgesia and allodynia.</text>
</comment>
<comment type="function">
    <molecule>Orphanin FQ2</molecule>
    <text evidence="2">Has potent analgesic activity.</text>
</comment>
<comment type="subcellular location">
    <subcellularLocation>
        <location>Secreted</location>
    </subcellularLocation>
</comment>
<comment type="tissue specificity">
    <text evidence="6 7">Expressed predominantly in the spinal cord and brain, being more abundant in the hypothalamus and striatum. Also found in small amounts in ovary.</text>
</comment>
<comment type="PTM">
    <text>Specific enzymatic cleavages at paired basic residues probably yield other active peptides besides nociceptin.</text>
</comment>
<comment type="PTM">
    <text>The N-terminal domain contains 6 conserved cysteines thought to be involved in disulfide bonding and/or processing.</text>
</comment>
<comment type="similarity">
    <text evidence="8">Belongs to the opioid neuropeptide precursor family.</text>
</comment>
<dbReference type="EMBL" id="U48262">
    <property type="protein sequence ID" value="AAC52726.1"/>
    <property type="molecule type" value="mRNA"/>
</dbReference>
<dbReference type="EMBL" id="X97375">
    <property type="protein sequence ID" value="CAA66043.1"/>
    <property type="molecule type" value="mRNA"/>
</dbReference>
<dbReference type="EMBL" id="S79730">
    <property type="protein sequence ID" value="AAB35376.1"/>
    <property type="molecule type" value="mRNA"/>
</dbReference>
<dbReference type="PIR" id="JC6151">
    <property type="entry name" value="JC6151"/>
</dbReference>
<dbReference type="RefSeq" id="NP_037139.1">
    <property type="nucleotide sequence ID" value="NM_013007.1"/>
</dbReference>
<dbReference type="RefSeq" id="XP_006252261.1">
    <property type="nucleotide sequence ID" value="XM_006252199.3"/>
</dbReference>
<dbReference type="RefSeq" id="XP_063130068.1">
    <property type="nucleotide sequence ID" value="XM_063273998.1"/>
</dbReference>
<dbReference type="SMR" id="Q62923"/>
<dbReference type="FunCoup" id="Q62923">
    <property type="interactions" value="37"/>
</dbReference>
<dbReference type="STRING" id="10116.ENSRNOP00000019117"/>
<dbReference type="PhosphoSitePlus" id="Q62923"/>
<dbReference type="PaxDb" id="10116-ENSRNOP00000019117"/>
<dbReference type="Ensembl" id="ENSRNOT00000019117.8">
    <property type="protein sequence ID" value="ENSRNOP00000019117.6"/>
    <property type="gene ID" value="ENSRNOG00000014231.8"/>
</dbReference>
<dbReference type="GeneID" id="25516"/>
<dbReference type="KEGG" id="rno:25516"/>
<dbReference type="UCSC" id="RGD:3362">
    <property type="organism name" value="rat"/>
</dbReference>
<dbReference type="AGR" id="RGD:3362"/>
<dbReference type="CTD" id="5368"/>
<dbReference type="RGD" id="3362">
    <property type="gene designation" value="Pnoc"/>
</dbReference>
<dbReference type="eggNOG" id="ENOG502S0DD">
    <property type="taxonomic scope" value="Eukaryota"/>
</dbReference>
<dbReference type="GeneTree" id="ENSGT00950000183149"/>
<dbReference type="HOGENOM" id="CLU_143892_0_0_1"/>
<dbReference type="InParanoid" id="Q62923"/>
<dbReference type="OMA" id="DCLNCHR"/>
<dbReference type="OrthoDB" id="9884757at2759"/>
<dbReference type="PhylomeDB" id="Q62923"/>
<dbReference type="Reactome" id="R-RNO-375276">
    <property type="pathway name" value="Peptide ligand-binding receptors"/>
</dbReference>
<dbReference type="Reactome" id="R-RNO-418594">
    <property type="pathway name" value="G alpha (i) signalling events"/>
</dbReference>
<dbReference type="PRO" id="PR:Q62923"/>
<dbReference type="Proteomes" id="UP000002494">
    <property type="component" value="Chromosome 15"/>
</dbReference>
<dbReference type="Bgee" id="ENSRNOG00000014231">
    <property type="expression patterns" value="Expressed in cerebellum and 6 other cell types or tissues"/>
</dbReference>
<dbReference type="GO" id="GO:0043679">
    <property type="term" value="C:axon terminus"/>
    <property type="evidence" value="ECO:0000318"/>
    <property type="project" value="GO_Central"/>
</dbReference>
<dbReference type="GO" id="GO:0030425">
    <property type="term" value="C:dendrite"/>
    <property type="evidence" value="ECO:0000318"/>
    <property type="project" value="GO_Central"/>
</dbReference>
<dbReference type="GO" id="GO:0005576">
    <property type="term" value="C:extracellular region"/>
    <property type="evidence" value="ECO:0007669"/>
    <property type="project" value="UniProtKB-SubCell"/>
</dbReference>
<dbReference type="GO" id="GO:0043025">
    <property type="term" value="C:neuronal cell body"/>
    <property type="evidence" value="ECO:0000318"/>
    <property type="project" value="GO_Central"/>
</dbReference>
<dbReference type="GO" id="GO:0005886">
    <property type="term" value="C:plasma membrane"/>
    <property type="evidence" value="ECO:0000318"/>
    <property type="project" value="GO_Central"/>
</dbReference>
<dbReference type="GO" id="GO:0097060">
    <property type="term" value="C:synaptic membrane"/>
    <property type="evidence" value="ECO:0000266"/>
    <property type="project" value="RGD"/>
</dbReference>
<dbReference type="GO" id="GO:0001515">
    <property type="term" value="F:opioid peptide activity"/>
    <property type="evidence" value="ECO:0007669"/>
    <property type="project" value="UniProtKB-KW"/>
</dbReference>
<dbReference type="GO" id="GO:0048018">
    <property type="term" value="F:receptor ligand activity"/>
    <property type="evidence" value="ECO:0000266"/>
    <property type="project" value="RGD"/>
</dbReference>
<dbReference type="GO" id="GO:0007268">
    <property type="term" value="P:chemical synaptic transmission"/>
    <property type="evidence" value="ECO:0000314"/>
    <property type="project" value="RGD"/>
</dbReference>
<dbReference type="GO" id="GO:0007565">
    <property type="term" value="P:female pregnancy"/>
    <property type="evidence" value="ECO:0000270"/>
    <property type="project" value="RGD"/>
</dbReference>
<dbReference type="GO" id="GO:0007270">
    <property type="term" value="P:neuron-neuron synaptic transmission"/>
    <property type="evidence" value="ECO:0000266"/>
    <property type="project" value="RGD"/>
</dbReference>
<dbReference type="GO" id="GO:0007218">
    <property type="term" value="P:neuropeptide signaling pathway"/>
    <property type="evidence" value="ECO:0000314"/>
    <property type="project" value="RGD"/>
</dbReference>
<dbReference type="GO" id="GO:0007600">
    <property type="term" value="P:sensory perception"/>
    <property type="evidence" value="ECO:0000318"/>
    <property type="project" value="GO_Central"/>
</dbReference>
<dbReference type="GO" id="GO:0019233">
    <property type="term" value="P:sensory perception of pain"/>
    <property type="evidence" value="ECO:0000266"/>
    <property type="project" value="RGD"/>
</dbReference>
<dbReference type="InterPro" id="IPR002367">
    <property type="entry name" value="Nociceptin"/>
</dbReference>
<dbReference type="InterPro" id="IPR006024">
    <property type="entry name" value="Opioid_neupept"/>
</dbReference>
<dbReference type="PANTHER" id="PTHR11438:SF2">
    <property type="entry name" value="PREPRONOCICEPTIN"/>
    <property type="match status" value="1"/>
</dbReference>
<dbReference type="PANTHER" id="PTHR11438">
    <property type="entry name" value="PROENKEPHALIN"/>
    <property type="match status" value="1"/>
</dbReference>
<dbReference type="Pfam" id="PF01160">
    <property type="entry name" value="Opiods_neuropep"/>
    <property type="match status" value="1"/>
</dbReference>
<dbReference type="PRINTS" id="PR01028">
    <property type="entry name" value="OPIOIDPRCRSR"/>
</dbReference>
<dbReference type="PRINTS" id="PR01031">
    <property type="entry name" value="ORPHNNPRCRSR"/>
</dbReference>
<dbReference type="PROSITE" id="PS01252">
    <property type="entry name" value="OPIOIDS_PRECURSOR"/>
    <property type="match status" value="1"/>
</dbReference>
<name>PNOC_RAT</name>
<accession>Q62923</accession>
<accession>Q64162</accession>
<proteinExistence type="evidence at protein level"/>
<protein>
    <recommendedName>
        <fullName>Prepronociceptin</fullName>
    </recommendedName>
    <component>
        <recommendedName>
            <fullName>Nocistatin</fullName>
        </recommendedName>
    </component>
    <component>
        <recommendedName>
            <fullName>Nociceptin</fullName>
        </recommendedName>
        <alternativeName>
            <fullName>ORL1 receptor agonist</fullName>
        </alternativeName>
        <alternativeName>
            <fullName>Orphanin FQ</fullName>
        </alternativeName>
        <alternativeName>
            <fullName>PPNOC</fullName>
        </alternativeName>
    </component>
    <component>
        <recommendedName>
            <fullName>Orphanin FQ2</fullName>
        </recommendedName>
    </component>
</protein>
<sequence>MKILFCDVLLLSLLSSVFSSCPEDCLTCQERLHPAPGSFNLKLCILQCEEKVFPRPLWTLCTKAMASDSEQLSPADPELTSAALYQSKASEMQHLKRMPRVRSVVQARDAEPEADAEPVADEADEVEQKQLQKRFGGFTGARKSARKLANQKRFSEFMRQYLVLSMQSSQRRRTLHQNGNV</sequence>
<keyword id="KW-0165">Cleavage on pair of basic residues</keyword>
<keyword id="KW-0903">Direct protein sequencing</keyword>
<keyword id="KW-1015">Disulfide bond</keyword>
<keyword id="KW-0527">Neuropeptide</keyword>
<keyword id="KW-0529">Neurotransmitter</keyword>
<keyword id="KW-0555">Opioid peptide</keyword>
<keyword id="KW-1185">Reference proteome</keyword>
<keyword id="KW-0677">Repeat</keyword>
<keyword id="KW-0964">Secreted</keyword>
<keyword id="KW-0732">Signal</keyword>
<feature type="signal peptide" evidence="3">
    <location>
        <begin position="1"/>
        <end position="19"/>
    </location>
</feature>
<feature type="propeptide" id="PRO_0000008335">
    <location>
        <begin position="20"/>
        <end position="95"/>
    </location>
</feature>
<feature type="peptide" id="PRO_0000008336" description="Nocistatin" evidence="8">
    <location>
        <begin position="98"/>
        <end position="132"/>
    </location>
</feature>
<feature type="peptide" id="PRO_0000008337" description="Nociceptin" evidence="5">
    <location>
        <begin position="135"/>
        <end position="151"/>
    </location>
</feature>
<feature type="peptide" id="PRO_0000008338" description="Orphanin FQ2" evidence="8">
    <location>
        <begin position="154"/>
        <end position="170"/>
    </location>
</feature>
<feature type="propeptide" id="PRO_0000008339">
    <location>
        <begin position="174"/>
        <end position="181"/>
    </location>
</feature>
<feature type="repeat" description="1">
    <location>
        <begin position="109"/>
        <end position="114"/>
    </location>
</feature>
<feature type="repeat" description="2">
    <location>
        <begin position="115"/>
        <end position="120"/>
    </location>
</feature>
<feature type="region of interest" description="Disordered" evidence="4">
    <location>
        <begin position="103"/>
        <end position="125"/>
    </location>
</feature>
<feature type="region of interest" description="2 X 6 AA tandem repeats of D-A-E-P-X-A">
    <location>
        <begin position="109"/>
        <end position="120"/>
    </location>
</feature>
<feature type="compositionally biased region" description="Acidic residues" evidence="4">
    <location>
        <begin position="112"/>
        <end position="125"/>
    </location>
</feature>